<comment type="function">
    <text evidence="1">Part of the ABC transporter complex FbpABC (TC 3.A.1.10.1) involved in Fe(3+) ions import. Probably responsible for the translocation of the substrate across the membrane (By similarity).</text>
</comment>
<comment type="subunit">
    <text evidence="3">The complex is composed of two ATP-binding proteins (FbpC), two transmembrane proteins (FbpB) and a solute-binding protein (FbpA).</text>
</comment>
<comment type="subcellular location">
    <subcellularLocation>
        <location evidence="3">Cell inner membrane</location>
        <topology evidence="3">Multi-pass membrane protein</topology>
    </subcellularLocation>
</comment>
<comment type="similarity">
    <text evidence="3">Belongs to the binding-protein-dependent transport system permease family. FbpB subfamily.</text>
</comment>
<keyword id="KW-0997">Cell inner membrane</keyword>
<keyword id="KW-1003">Cell membrane</keyword>
<keyword id="KW-0406">Ion transport</keyword>
<keyword id="KW-0408">Iron</keyword>
<keyword id="KW-0410">Iron transport</keyword>
<keyword id="KW-0472">Membrane</keyword>
<keyword id="KW-1185">Reference proteome</keyword>
<keyword id="KW-0677">Repeat</keyword>
<keyword id="KW-0812">Transmembrane</keyword>
<keyword id="KW-1133">Transmembrane helix</keyword>
<keyword id="KW-0813">Transport</keyword>
<evidence type="ECO:0000250" key="1"/>
<evidence type="ECO:0000255" key="2">
    <source>
        <dbReference type="PROSITE-ProRule" id="PRU00441"/>
    </source>
</evidence>
<evidence type="ECO:0000305" key="3"/>
<gene>
    <name type="primary">fbpB1</name>
    <name type="synonym">afuB</name>
    <name type="ordered locus">HI_0129</name>
</gene>
<name>FBPB1_HAEIN</name>
<sequence length="632" mass="70263">MGWASFNLTWAWFLPVIVYGALPLLRLPQQTQAKTELFLTALSVLFMFISATVYKISMGYSVIVLLVGYTALATLSLAKLKVMQGDKFIIASLLCIILLIFFFIVYPTLAIFVSMFYDGDTFAPQQVMRILTQSYIVRVITNSLFLSGFVGIVSTVFGLAFALYTTRIARRTAFIGKIFSILPIVTPPFVVGLGVTLMLGRSGYVTEFLSTNFGFSSHNWLYGFNGIAIAQILAFAPISFMILDGALKSVHPSIEEASYTLRANRYQTFYQIIFPLLRPALANSFLIVFIQSLADFSNPLVLGGSFDVIATQIYFYIAGSQLDYASASTLGSMLLIFSLAIFIIQYIWIGNRSYVTVSGKSYRGDVQELPNGLKYTIIGMLGFWVIFNMALYGSIFYGSFTVNWGVNYTLTLKNYAMLFGQGLSDGAWPSLINTLIYAGIAAPLTAFFGLLIAYIVVRKDFQGKKSLEFLTMLCFAVPGTVAGVSYILAFNNAPLYITGTGIIVIISMVMRDLPIGMRAAIAGLGQLDKSLDEASLSLKGSSWKTLCFIVLPLLKPALLSALVTSFVRAMTTVSAIIFLVTADTRVYRIYFKSCGRRRIRHCDCIRFYFNCCDDGNYFVFRLDCRRYAYFPF</sequence>
<organism>
    <name type="scientific">Haemophilus influenzae (strain ATCC 51907 / DSM 11121 / KW20 / Rd)</name>
    <dbReference type="NCBI Taxonomy" id="71421"/>
    <lineage>
        <taxon>Bacteria</taxon>
        <taxon>Pseudomonadati</taxon>
        <taxon>Pseudomonadota</taxon>
        <taxon>Gammaproteobacteria</taxon>
        <taxon>Pasteurellales</taxon>
        <taxon>Pasteurellaceae</taxon>
        <taxon>Haemophilus</taxon>
    </lineage>
</organism>
<dbReference type="EMBL" id="L42023">
    <property type="protein sequence ID" value="AAC21802.1"/>
    <property type="molecule type" value="Genomic_DNA"/>
</dbReference>
<dbReference type="PIR" id="H64049">
    <property type="entry name" value="H64049"/>
</dbReference>
<dbReference type="RefSeq" id="NP_438299.1">
    <property type="nucleotide sequence ID" value="NC_000907.1"/>
</dbReference>
<dbReference type="SMR" id="Q57341"/>
<dbReference type="STRING" id="71421.HI_0129"/>
<dbReference type="EnsemblBacteria" id="AAC21802">
    <property type="protein sequence ID" value="AAC21802"/>
    <property type="gene ID" value="HI_0129"/>
</dbReference>
<dbReference type="KEGG" id="hin:HI_0129"/>
<dbReference type="PATRIC" id="fig|71421.8.peg.132"/>
<dbReference type="eggNOG" id="COG1178">
    <property type="taxonomic scope" value="Bacteria"/>
</dbReference>
<dbReference type="HOGENOM" id="CLU_021838_1_1_6"/>
<dbReference type="OrthoDB" id="7056428at2"/>
<dbReference type="PhylomeDB" id="Q57341"/>
<dbReference type="BioCyc" id="HINF71421:G1GJ1-140-MONOMER"/>
<dbReference type="Proteomes" id="UP000000579">
    <property type="component" value="Chromosome"/>
</dbReference>
<dbReference type="GO" id="GO:0005886">
    <property type="term" value="C:plasma membrane"/>
    <property type="evidence" value="ECO:0000318"/>
    <property type="project" value="GO_Central"/>
</dbReference>
<dbReference type="GO" id="GO:0006826">
    <property type="term" value="P:iron ion transport"/>
    <property type="evidence" value="ECO:0007669"/>
    <property type="project" value="UniProtKB-KW"/>
</dbReference>
<dbReference type="GO" id="GO:0055085">
    <property type="term" value="P:transmembrane transport"/>
    <property type="evidence" value="ECO:0007669"/>
    <property type="project" value="InterPro"/>
</dbReference>
<dbReference type="CDD" id="cd06261">
    <property type="entry name" value="TM_PBP2"/>
    <property type="match status" value="2"/>
</dbReference>
<dbReference type="FunFam" id="1.10.3720.10:FF:000093">
    <property type="entry name" value="Iron(III) ABC transporter, permease protein"/>
    <property type="match status" value="1"/>
</dbReference>
<dbReference type="Gene3D" id="1.10.3720.10">
    <property type="entry name" value="MetI-like"/>
    <property type="match status" value="2"/>
</dbReference>
<dbReference type="InterPro" id="IPR000515">
    <property type="entry name" value="MetI-like"/>
</dbReference>
<dbReference type="InterPro" id="IPR035906">
    <property type="entry name" value="MetI-like_sf"/>
</dbReference>
<dbReference type="PANTHER" id="PTHR30183">
    <property type="entry name" value="MOLYBDENUM TRANSPORT SYSTEM PERMEASE PROTEIN MODB"/>
    <property type="match status" value="1"/>
</dbReference>
<dbReference type="PANTHER" id="PTHR30183:SF3">
    <property type="entry name" value="MOLYBDENUM TRANSPORT SYSTEM PERMEASE PROTEIN MODB"/>
    <property type="match status" value="1"/>
</dbReference>
<dbReference type="Pfam" id="PF00528">
    <property type="entry name" value="BPD_transp_1"/>
    <property type="match status" value="2"/>
</dbReference>
<dbReference type="SUPFAM" id="SSF161098">
    <property type="entry name" value="MetI-like"/>
    <property type="match status" value="2"/>
</dbReference>
<dbReference type="PROSITE" id="PS50928">
    <property type="entry name" value="ABC_TM1"/>
    <property type="match status" value="2"/>
</dbReference>
<reference key="1">
    <citation type="journal article" date="1995" name="Science">
        <title>Whole-genome random sequencing and assembly of Haemophilus influenzae Rd.</title>
        <authorList>
            <person name="Fleischmann R.D."/>
            <person name="Adams M.D."/>
            <person name="White O."/>
            <person name="Clayton R.A."/>
            <person name="Kirkness E.F."/>
            <person name="Kerlavage A.R."/>
            <person name="Bult C.J."/>
            <person name="Tomb J.-F."/>
            <person name="Dougherty B.A."/>
            <person name="Merrick J.M."/>
            <person name="McKenney K."/>
            <person name="Sutton G.G."/>
            <person name="FitzHugh W."/>
            <person name="Fields C.A."/>
            <person name="Gocayne J.D."/>
            <person name="Scott J.D."/>
            <person name="Shirley R."/>
            <person name="Liu L.-I."/>
            <person name="Glodek A."/>
            <person name="Kelley J.M."/>
            <person name="Weidman J.F."/>
            <person name="Phillips C.A."/>
            <person name="Spriggs T."/>
            <person name="Hedblom E."/>
            <person name="Cotton M.D."/>
            <person name="Utterback T.R."/>
            <person name="Hanna M.C."/>
            <person name="Nguyen D.T."/>
            <person name="Saudek D.M."/>
            <person name="Brandon R.C."/>
            <person name="Fine L.D."/>
            <person name="Fritchman J.L."/>
            <person name="Fuhrmann J.L."/>
            <person name="Geoghagen N.S.M."/>
            <person name="Gnehm C.L."/>
            <person name="McDonald L.A."/>
            <person name="Small K.V."/>
            <person name="Fraser C.M."/>
            <person name="Smith H.O."/>
            <person name="Venter J.C."/>
        </authorList>
    </citation>
    <scope>NUCLEOTIDE SEQUENCE [LARGE SCALE GENOMIC DNA]</scope>
    <source>
        <strain>ATCC 51907 / DSM 11121 / KW20 / Rd</strain>
    </source>
</reference>
<reference key="2">
    <citation type="submission" date="1998-05" db="EMBL/GenBank/DDBJ databases">
        <authorList>
            <person name="White O."/>
            <person name="Clayton R.A."/>
            <person name="Kerlavage A.R."/>
            <person name="Fleischmann R.D."/>
            <person name="Peterson J."/>
            <person name="Hickey E."/>
            <person name="Dodson R."/>
            <person name="Gwinn M."/>
        </authorList>
    </citation>
    <scope>SEQUENCE REVISION</scope>
</reference>
<proteinExistence type="inferred from homology"/>
<feature type="chain" id="PRO_0000060017" description="Putative ferric transport system permease protein FbpB 1">
    <location>
        <begin position="1"/>
        <end position="632"/>
    </location>
</feature>
<feature type="transmembrane region" description="Helical" evidence="2">
    <location>
        <begin position="5"/>
        <end position="25"/>
    </location>
</feature>
<feature type="transmembrane region" description="Helical" evidence="2">
    <location>
        <begin position="37"/>
        <end position="57"/>
    </location>
</feature>
<feature type="transmembrane region" description="Helical" evidence="2">
    <location>
        <begin position="58"/>
        <end position="78"/>
    </location>
</feature>
<feature type="transmembrane region" description="Helical" evidence="2">
    <location>
        <begin position="93"/>
        <end position="113"/>
    </location>
</feature>
<feature type="transmembrane region" description="Helical" evidence="2">
    <location>
        <begin position="144"/>
        <end position="164"/>
    </location>
</feature>
<feature type="transmembrane region" description="Helical" evidence="2">
    <location>
        <begin position="178"/>
        <end position="198"/>
    </location>
</feature>
<feature type="transmembrane region" description="Helical" evidence="2">
    <location>
        <begin position="223"/>
        <end position="243"/>
    </location>
</feature>
<feature type="transmembrane region" description="Helical" evidence="2">
    <location>
        <begin position="270"/>
        <end position="290"/>
    </location>
</feature>
<feature type="transmembrane region" description="Helical" evidence="2">
    <location>
        <begin position="299"/>
        <end position="319"/>
    </location>
</feature>
<feature type="transmembrane region" description="Helical" evidence="2">
    <location>
        <begin position="330"/>
        <end position="350"/>
    </location>
</feature>
<feature type="transmembrane region" description="Helical" evidence="2">
    <location>
        <begin position="377"/>
        <end position="397"/>
    </location>
</feature>
<feature type="transmembrane region" description="Helical" evidence="2">
    <location>
        <begin position="436"/>
        <end position="456"/>
    </location>
</feature>
<feature type="transmembrane region" description="Helical" evidence="2">
    <location>
        <begin position="469"/>
        <end position="489"/>
    </location>
</feature>
<feature type="transmembrane region" description="Helical" evidence="2">
    <location>
        <begin position="490"/>
        <end position="510"/>
    </location>
</feature>
<feature type="transmembrane region" description="Helical" evidence="2">
    <location>
        <begin position="547"/>
        <end position="567"/>
    </location>
</feature>
<feature type="domain" description="ABC transmembrane type-1 1" evidence="2">
    <location>
        <begin position="140"/>
        <end position="345"/>
    </location>
</feature>
<feature type="domain" description="ABC transmembrane type-1 2" evidence="2">
    <location>
        <begin position="431"/>
        <end position="632"/>
    </location>
</feature>
<accession>Q57341</accession>
<accession>O05010</accession>
<protein>
    <recommendedName>
        <fullName>Putative ferric transport system permease protein FbpB 1</fullName>
    </recommendedName>
</protein>